<reference key="1">
    <citation type="journal article" date="2005" name="Science">
        <title>The transcriptional landscape of the mammalian genome.</title>
        <authorList>
            <person name="Carninci P."/>
            <person name="Kasukawa T."/>
            <person name="Katayama S."/>
            <person name="Gough J."/>
            <person name="Frith M.C."/>
            <person name="Maeda N."/>
            <person name="Oyama R."/>
            <person name="Ravasi T."/>
            <person name="Lenhard B."/>
            <person name="Wells C."/>
            <person name="Kodzius R."/>
            <person name="Shimokawa K."/>
            <person name="Bajic V.B."/>
            <person name="Brenner S.E."/>
            <person name="Batalov S."/>
            <person name="Forrest A.R."/>
            <person name="Zavolan M."/>
            <person name="Davis M.J."/>
            <person name="Wilming L.G."/>
            <person name="Aidinis V."/>
            <person name="Allen J.E."/>
            <person name="Ambesi-Impiombato A."/>
            <person name="Apweiler R."/>
            <person name="Aturaliya R.N."/>
            <person name="Bailey T.L."/>
            <person name="Bansal M."/>
            <person name="Baxter L."/>
            <person name="Beisel K.W."/>
            <person name="Bersano T."/>
            <person name="Bono H."/>
            <person name="Chalk A.M."/>
            <person name="Chiu K.P."/>
            <person name="Choudhary V."/>
            <person name="Christoffels A."/>
            <person name="Clutterbuck D.R."/>
            <person name="Crowe M.L."/>
            <person name="Dalla E."/>
            <person name="Dalrymple B.P."/>
            <person name="de Bono B."/>
            <person name="Della Gatta G."/>
            <person name="di Bernardo D."/>
            <person name="Down T."/>
            <person name="Engstrom P."/>
            <person name="Fagiolini M."/>
            <person name="Faulkner G."/>
            <person name="Fletcher C.F."/>
            <person name="Fukushima T."/>
            <person name="Furuno M."/>
            <person name="Futaki S."/>
            <person name="Gariboldi M."/>
            <person name="Georgii-Hemming P."/>
            <person name="Gingeras T.R."/>
            <person name="Gojobori T."/>
            <person name="Green R.E."/>
            <person name="Gustincich S."/>
            <person name="Harbers M."/>
            <person name="Hayashi Y."/>
            <person name="Hensch T.K."/>
            <person name="Hirokawa N."/>
            <person name="Hill D."/>
            <person name="Huminiecki L."/>
            <person name="Iacono M."/>
            <person name="Ikeo K."/>
            <person name="Iwama A."/>
            <person name="Ishikawa T."/>
            <person name="Jakt M."/>
            <person name="Kanapin A."/>
            <person name="Katoh M."/>
            <person name="Kawasawa Y."/>
            <person name="Kelso J."/>
            <person name="Kitamura H."/>
            <person name="Kitano H."/>
            <person name="Kollias G."/>
            <person name="Krishnan S.P."/>
            <person name="Kruger A."/>
            <person name="Kummerfeld S.K."/>
            <person name="Kurochkin I.V."/>
            <person name="Lareau L.F."/>
            <person name="Lazarevic D."/>
            <person name="Lipovich L."/>
            <person name="Liu J."/>
            <person name="Liuni S."/>
            <person name="McWilliam S."/>
            <person name="Madan Babu M."/>
            <person name="Madera M."/>
            <person name="Marchionni L."/>
            <person name="Matsuda H."/>
            <person name="Matsuzawa S."/>
            <person name="Miki H."/>
            <person name="Mignone F."/>
            <person name="Miyake S."/>
            <person name="Morris K."/>
            <person name="Mottagui-Tabar S."/>
            <person name="Mulder N."/>
            <person name="Nakano N."/>
            <person name="Nakauchi H."/>
            <person name="Ng P."/>
            <person name="Nilsson R."/>
            <person name="Nishiguchi S."/>
            <person name="Nishikawa S."/>
            <person name="Nori F."/>
            <person name="Ohara O."/>
            <person name="Okazaki Y."/>
            <person name="Orlando V."/>
            <person name="Pang K.C."/>
            <person name="Pavan W.J."/>
            <person name="Pavesi G."/>
            <person name="Pesole G."/>
            <person name="Petrovsky N."/>
            <person name="Piazza S."/>
            <person name="Reed J."/>
            <person name="Reid J.F."/>
            <person name="Ring B.Z."/>
            <person name="Ringwald M."/>
            <person name="Rost B."/>
            <person name="Ruan Y."/>
            <person name="Salzberg S.L."/>
            <person name="Sandelin A."/>
            <person name="Schneider C."/>
            <person name="Schoenbach C."/>
            <person name="Sekiguchi K."/>
            <person name="Semple C.A."/>
            <person name="Seno S."/>
            <person name="Sessa L."/>
            <person name="Sheng Y."/>
            <person name="Shibata Y."/>
            <person name="Shimada H."/>
            <person name="Shimada K."/>
            <person name="Silva D."/>
            <person name="Sinclair B."/>
            <person name="Sperling S."/>
            <person name="Stupka E."/>
            <person name="Sugiura K."/>
            <person name="Sultana R."/>
            <person name="Takenaka Y."/>
            <person name="Taki K."/>
            <person name="Tammoja K."/>
            <person name="Tan S.L."/>
            <person name="Tang S."/>
            <person name="Taylor M.S."/>
            <person name="Tegner J."/>
            <person name="Teichmann S.A."/>
            <person name="Ueda H.R."/>
            <person name="van Nimwegen E."/>
            <person name="Verardo R."/>
            <person name="Wei C.L."/>
            <person name="Yagi K."/>
            <person name="Yamanishi H."/>
            <person name="Zabarovsky E."/>
            <person name="Zhu S."/>
            <person name="Zimmer A."/>
            <person name="Hide W."/>
            <person name="Bult C."/>
            <person name="Grimmond S.M."/>
            <person name="Teasdale R.D."/>
            <person name="Liu E.T."/>
            <person name="Brusic V."/>
            <person name="Quackenbush J."/>
            <person name="Wahlestedt C."/>
            <person name="Mattick J.S."/>
            <person name="Hume D.A."/>
            <person name="Kai C."/>
            <person name="Sasaki D."/>
            <person name="Tomaru Y."/>
            <person name="Fukuda S."/>
            <person name="Kanamori-Katayama M."/>
            <person name="Suzuki M."/>
            <person name="Aoki J."/>
            <person name="Arakawa T."/>
            <person name="Iida J."/>
            <person name="Imamura K."/>
            <person name="Itoh M."/>
            <person name="Kato T."/>
            <person name="Kawaji H."/>
            <person name="Kawagashira N."/>
            <person name="Kawashima T."/>
            <person name="Kojima M."/>
            <person name="Kondo S."/>
            <person name="Konno H."/>
            <person name="Nakano K."/>
            <person name="Ninomiya N."/>
            <person name="Nishio T."/>
            <person name="Okada M."/>
            <person name="Plessy C."/>
            <person name="Shibata K."/>
            <person name="Shiraki T."/>
            <person name="Suzuki S."/>
            <person name="Tagami M."/>
            <person name="Waki K."/>
            <person name="Watahiki A."/>
            <person name="Okamura-Oho Y."/>
            <person name="Suzuki H."/>
            <person name="Kawai J."/>
            <person name="Hayashizaki Y."/>
        </authorList>
    </citation>
    <scope>NUCLEOTIDE SEQUENCE [LARGE SCALE MRNA]</scope>
    <source>
        <strain>C57BL/6J</strain>
        <tissue>Testis</tissue>
    </source>
</reference>
<reference key="2">
    <citation type="journal article" date="2009" name="PLoS Biol.">
        <title>Lineage-specific biology revealed by a finished genome assembly of the mouse.</title>
        <authorList>
            <person name="Church D.M."/>
            <person name="Goodstadt L."/>
            <person name="Hillier L.W."/>
            <person name="Zody M.C."/>
            <person name="Goldstein S."/>
            <person name="She X."/>
            <person name="Bult C.J."/>
            <person name="Agarwala R."/>
            <person name="Cherry J.L."/>
            <person name="DiCuccio M."/>
            <person name="Hlavina W."/>
            <person name="Kapustin Y."/>
            <person name="Meric P."/>
            <person name="Maglott D."/>
            <person name="Birtle Z."/>
            <person name="Marques A.C."/>
            <person name="Graves T."/>
            <person name="Zhou S."/>
            <person name="Teague B."/>
            <person name="Potamousis K."/>
            <person name="Churas C."/>
            <person name="Place M."/>
            <person name="Herschleb J."/>
            <person name="Runnheim R."/>
            <person name="Forrest D."/>
            <person name="Amos-Landgraf J."/>
            <person name="Schwartz D.C."/>
            <person name="Cheng Z."/>
            <person name="Lindblad-Toh K."/>
            <person name="Eichler E.E."/>
            <person name="Ponting C.P."/>
        </authorList>
    </citation>
    <scope>NUCLEOTIDE SEQUENCE [LARGE SCALE GENOMIC DNA]</scope>
    <source>
        <strain>C57BL/6J</strain>
    </source>
</reference>
<reference key="3">
    <citation type="journal article" date="2004" name="Genome Res.">
        <title>The status, quality, and expansion of the NIH full-length cDNA project: the Mammalian Gene Collection (MGC).</title>
        <authorList>
            <consortium name="The MGC Project Team"/>
        </authorList>
    </citation>
    <scope>NUCLEOTIDE SEQUENCE [LARGE SCALE MRNA]</scope>
    <source>
        <tissue>Testis</tissue>
    </source>
</reference>
<reference key="4">
    <citation type="submission" date="2009-01" db="UniProtKB">
        <authorList>
            <person name="Lubec G."/>
            <person name="Sunyer B."/>
            <person name="Chen W.-Q."/>
        </authorList>
    </citation>
    <scope>PROTEIN SEQUENCE OF 21-39</scope>
    <scope>IDENTIFICATION BY MASS SPECTROMETRY</scope>
    <source>
        <strain>OF1</strain>
        <tissue>Hippocampus</tissue>
    </source>
</reference>
<gene>
    <name type="primary">Kif2b</name>
</gene>
<protein>
    <recommendedName>
        <fullName>Kinesin-like protein KIF2B</fullName>
    </recommendedName>
</protein>
<sequence length="668" mass="75469">MASQFCLPLAPRLSPLKPLKSHFTDFQVGICVAIQRSDKRIHLAVVTEINRENSWVTVEWVEKGVKKGKKIELETVLLLNPALASLEHQRSRRPLRPVSVVPSTAIGDQRTATKWIAMIPHRNETPSGDSQTLMIPSNPCLMKRKKSPCLREIEKLQKQREKRRRLQLEIRARRALDINTGNPNFETMRMIEEYRRRLDSSKMSSLEPPEDHRICVCVRKRPLNQRETTMKDLDIITIPSHNVVMVHESKQKVDLTRYLENQTFCFDHAFDDKASNELVYQFTARPLVESIFRKGMATCFAYGQTGSGKTHTMGGAFLGKAQDCSKGIYALVAQDVFLLLKTPAYEKLELKVYGTFFEIYGGKVYDLLNWKKKLQVLEDGNQQVQVVGLQEQEVSCVEEVLNLVELGNSCRTSGQTSVNAHSSRSHAVFQLILKAGGKLHGKFSLVDLAGNERGADTAKATRKRQLEGAEINKSLLALKECIRALGKNKSHTPFRASKLTQVLRDSFIGQNSYTCMIATISPGMTSCENTLNTLRYANRVKELALEARPYHHCVSPPGHEVPLMIENDNTNSGKSLQRDEVIQIPTVEKEEEKESDELTSKKEPAASWSRSNQWWEAIQETAEGVNGDVDFCIAQSLSVLEQKIGVLTDIQKKLQSLREDLQKKSQVE</sequence>
<keyword id="KW-0067">ATP-binding</keyword>
<keyword id="KW-0131">Cell cycle</keyword>
<keyword id="KW-0132">Cell division</keyword>
<keyword id="KW-0137">Centromere</keyword>
<keyword id="KW-0158">Chromosome</keyword>
<keyword id="KW-0175">Coiled coil</keyword>
<keyword id="KW-0963">Cytoplasm</keyword>
<keyword id="KW-0206">Cytoskeleton</keyword>
<keyword id="KW-0903">Direct protein sequencing</keyword>
<keyword id="KW-0995">Kinetochore</keyword>
<keyword id="KW-0493">Microtubule</keyword>
<keyword id="KW-0498">Mitosis</keyword>
<keyword id="KW-0505">Motor protein</keyword>
<keyword id="KW-0547">Nucleotide-binding</keyword>
<keyword id="KW-0597">Phosphoprotein</keyword>
<keyword id="KW-1185">Reference proteome</keyword>
<dbReference type="EMBL" id="AK030188">
    <property type="protein sequence ID" value="BAC26831.1"/>
    <property type="molecule type" value="mRNA"/>
</dbReference>
<dbReference type="EMBL" id="AL662779">
    <property type="status" value="NOT_ANNOTATED_CDS"/>
    <property type="molecule type" value="Genomic_DNA"/>
</dbReference>
<dbReference type="EMBL" id="BC100484">
    <property type="protein sequence ID" value="AAI00485.1"/>
    <property type="molecule type" value="mRNA"/>
</dbReference>
<dbReference type="CCDS" id="CCDS36281.1"/>
<dbReference type="RefSeq" id="NP_082823.1">
    <property type="nucleotide sequence ID" value="NM_028547.3"/>
</dbReference>
<dbReference type="SMR" id="Q8C0N1"/>
<dbReference type="FunCoup" id="Q8C0N1">
    <property type="interactions" value="73"/>
</dbReference>
<dbReference type="STRING" id="10090.ENSMUSP00000058084"/>
<dbReference type="GlyGen" id="Q8C0N1">
    <property type="glycosylation" value="1 site, 1 O-linked glycan (1 site)"/>
</dbReference>
<dbReference type="iPTMnet" id="Q8C0N1"/>
<dbReference type="PhosphoSitePlus" id="Q8C0N1"/>
<dbReference type="jPOST" id="Q8C0N1"/>
<dbReference type="PaxDb" id="10090-ENSMUSP00000058084"/>
<dbReference type="ProteomicsDB" id="269304"/>
<dbReference type="Antibodypedia" id="30815">
    <property type="antibodies" value="161 antibodies from 25 providers"/>
</dbReference>
<dbReference type="DNASU" id="73470"/>
<dbReference type="Ensembl" id="ENSMUST00000061019.6">
    <property type="protein sequence ID" value="ENSMUSP00000058084.5"/>
    <property type="gene ID" value="ENSMUSG00000046755.6"/>
</dbReference>
<dbReference type="GeneID" id="73470"/>
<dbReference type="KEGG" id="mmu:73470"/>
<dbReference type="UCSC" id="uc007kxf.1">
    <property type="organism name" value="mouse"/>
</dbReference>
<dbReference type="AGR" id="MGI:1920720"/>
<dbReference type="CTD" id="84643"/>
<dbReference type="MGI" id="MGI:1920720">
    <property type="gene designation" value="Kif2b"/>
</dbReference>
<dbReference type="VEuPathDB" id="HostDB:ENSMUSG00000046755"/>
<dbReference type="eggNOG" id="KOG0246">
    <property type="taxonomic scope" value="Eukaryota"/>
</dbReference>
<dbReference type="GeneTree" id="ENSGT00940000163180"/>
<dbReference type="HOGENOM" id="CLU_001485_19_1_1"/>
<dbReference type="InParanoid" id="Q8C0N1"/>
<dbReference type="OMA" id="IYWGKVY"/>
<dbReference type="OrthoDB" id="3176171at2759"/>
<dbReference type="PhylomeDB" id="Q8C0N1"/>
<dbReference type="TreeFam" id="TF105222"/>
<dbReference type="Reactome" id="R-MMU-141444">
    <property type="pathway name" value="Amplification of signal from unattached kinetochores via a MAD2 inhibitory signal"/>
</dbReference>
<dbReference type="Reactome" id="R-MMU-2132295">
    <property type="pathway name" value="MHC class II antigen presentation"/>
</dbReference>
<dbReference type="Reactome" id="R-MMU-2467813">
    <property type="pathway name" value="Separation of Sister Chromatids"/>
</dbReference>
<dbReference type="Reactome" id="R-MMU-2500257">
    <property type="pathway name" value="Resolution of Sister Chromatid Cohesion"/>
</dbReference>
<dbReference type="Reactome" id="R-MMU-5663220">
    <property type="pathway name" value="RHO GTPases Activate Formins"/>
</dbReference>
<dbReference type="Reactome" id="R-MMU-6811434">
    <property type="pathway name" value="COPI-dependent Golgi-to-ER retrograde traffic"/>
</dbReference>
<dbReference type="Reactome" id="R-MMU-68877">
    <property type="pathway name" value="Mitotic Prometaphase"/>
</dbReference>
<dbReference type="Reactome" id="R-MMU-9648025">
    <property type="pathway name" value="EML4 and NUDC in mitotic spindle formation"/>
</dbReference>
<dbReference type="Reactome" id="R-MMU-983189">
    <property type="pathway name" value="Kinesins"/>
</dbReference>
<dbReference type="BioGRID-ORCS" id="73470">
    <property type="hits" value="5 hits in 77 CRISPR screens"/>
</dbReference>
<dbReference type="CD-CODE" id="CE726F99">
    <property type="entry name" value="Postsynaptic density"/>
</dbReference>
<dbReference type="PRO" id="PR:Q8C0N1"/>
<dbReference type="Proteomes" id="UP000000589">
    <property type="component" value="Chromosome 11"/>
</dbReference>
<dbReference type="RNAct" id="Q8C0N1">
    <property type="molecule type" value="protein"/>
</dbReference>
<dbReference type="Bgee" id="ENSMUSG00000046755">
    <property type="expression patterns" value="Expressed in seminiferous tubule of testis and 19 other cell types or tissues"/>
</dbReference>
<dbReference type="ExpressionAtlas" id="Q8C0N1">
    <property type="expression patterns" value="baseline and differential"/>
</dbReference>
<dbReference type="GO" id="GO:0005813">
    <property type="term" value="C:centrosome"/>
    <property type="evidence" value="ECO:0007669"/>
    <property type="project" value="UniProtKB-SubCell"/>
</dbReference>
<dbReference type="GO" id="GO:0005737">
    <property type="term" value="C:cytoplasm"/>
    <property type="evidence" value="ECO:0007669"/>
    <property type="project" value="UniProtKB-KW"/>
</dbReference>
<dbReference type="GO" id="GO:0000776">
    <property type="term" value="C:kinetochore"/>
    <property type="evidence" value="ECO:0007669"/>
    <property type="project" value="UniProtKB-KW"/>
</dbReference>
<dbReference type="GO" id="GO:0005874">
    <property type="term" value="C:microtubule"/>
    <property type="evidence" value="ECO:0007669"/>
    <property type="project" value="UniProtKB-KW"/>
</dbReference>
<dbReference type="GO" id="GO:0005819">
    <property type="term" value="C:spindle"/>
    <property type="evidence" value="ECO:0007669"/>
    <property type="project" value="UniProtKB-SubCell"/>
</dbReference>
<dbReference type="GO" id="GO:0005524">
    <property type="term" value="F:ATP binding"/>
    <property type="evidence" value="ECO:0007669"/>
    <property type="project" value="UniProtKB-KW"/>
</dbReference>
<dbReference type="GO" id="GO:0008017">
    <property type="term" value="F:microtubule binding"/>
    <property type="evidence" value="ECO:0007669"/>
    <property type="project" value="InterPro"/>
</dbReference>
<dbReference type="GO" id="GO:0003777">
    <property type="term" value="F:microtubule motor activity"/>
    <property type="evidence" value="ECO:0007669"/>
    <property type="project" value="InterPro"/>
</dbReference>
<dbReference type="GO" id="GO:0051301">
    <property type="term" value="P:cell division"/>
    <property type="evidence" value="ECO:0007669"/>
    <property type="project" value="UniProtKB-KW"/>
</dbReference>
<dbReference type="GO" id="GO:0051310">
    <property type="term" value="P:metaphase chromosome alignment"/>
    <property type="evidence" value="ECO:0000250"/>
    <property type="project" value="UniProtKB"/>
</dbReference>
<dbReference type="GO" id="GO:0007019">
    <property type="term" value="P:microtubule depolymerization"/>
    <property type="evidence" value="ECO:0000250"/>
    <property type="project" value="UniProtKB"/>
</dbReference>
<dbReference type="GO" id="GO:0007018">
    <property type="term" value="P:microtubule-based movement"/>
    <property type="evidence" value="ECO:0007669"/>
    <property type="project" value="InterPro"/>
</dbReference>
<dbReference type="GO" id="GO:0051983">
    <property type="term" value="P:regulation of chromosome segregation"/>
    <property type="evidence" value="ECO:0000250"/>
    <property type="project" value="UniProtKB"/>
</dbReference>
<dbReference type="CDD" id="cd01367">
    <property type="entry name" value="KISc_KIF2_like"/>
    <property type="match status" value="1"/>
</dbReference>
<dbReference type="FunFam" id="3.40.850.10:FF:000012">
    <property type="entry name" value="Kinesin-like protein"/>
    <property type="match status" value="1"/>
</dbReference>
<dbReference type="Gene3D" id="3.40.850.10">
    <property type="entry name" value="Kinesin motor domain"/>
    <property type="match status" value="1"/>
</dbReference>
<dbReference type="InterPro" id="IPR054473">
    <property type="entry name" value="KIF2A-like_N"/>
</dbReference>
<dbReference type="InterPro" id="IPR027640">
    <property type="entry name" value="Kinesin-like_fam"/>
</dbReference>
<dbReference type="InterPro" id="IPR019821">
    <property type="entry name" value="Kinesin_motor_CS"/>
</dbReference>
<dbReference type="InterPro" id="IPR001752">
    <property type="entry name" value="Kinesin_motor_dom"/>
</dbReference>
<dbReference type="InterPro" id="IPR036961">
    <property type="entry name" value="Kinesin_motor_dom_sf"/>
</dbReference>
<dbReference type="InterPro" id="IPR027417">
    <property type="entry name" value="P-loop_NTPase"/>
</dbReference>
<dbReference type="PANTHER" id="PTHR47971:SF24">
    <property type="entry name" value="KINESIN-LIKE PROTEIN"/>
    <property type="match status" value="1"/>
</dbReference>
<dbReference type="PANTHER" id="PTHR47971">
    <property type="entry name" value="KINESIN-RELATED PROTEIN 6"/>
    <property type="match status" value="1"/>
</dbReference>
<dbReference type="Pfam" id="PF22923">
    <property type="entry name" value="KIF2A-like_1st"/>
    <property type="match status" value="1"/>
</dbReference>
<dbReference type="Pfam" id="PF00225">
    <property type="entry name" value="Kinesin"/>
    <property type="match status" value="1"/>
</dbReference>
<dbReference type="PRINTS" id="PR00380">
    <property type="entry name" value="KINESINHEAVY"/>
</dbReference>
<dbReference type="SMART" id="SM00129">
    <property type="entry name" value="KISc"/>
    <property type="match status" value="1"/>
</dbReference>
<dbReference type="SUPFAM" id="SSF52540">
    <property type="entry name" value="P-loop containing nucleoside triphosphate hydrolases"/>
    <property type="match status" value="1"/>
</dbReference>
<dbReference type="PROSITE" id="PS00411">
    <property type="entry name" value="KINESIN_MOTOR_1"/>
    <property type="match status" value="1"/>
</dbReference>
<dbReference type="PROSITE" id="PS50067">
    <property type="entry name" value="KINESIN_MOTOR_2"/>
    <property type="match status" value="1"/>
</dbReference>
<organism>
    <name type="scientific">Mus musculus</name>
    <name type="common">Mouse</name>
    <dbReference type="NCBI Taxonomy" id="10090"/>
    <lineage>
        <taxon>Eukaryota</taxon>
        <taxon>Metazoa</taxon>
        <taxon>Chordata</taxon>
        <taxon>Craniata</taxon>
        <taxon>Vertebrata</taxon>
        <taxon>Euteleostomi</taxon>
        <taxon>Mammalia</taxon>
        <taxon>Eutheria</taxon>
        <taxon>Euarchontoglires</taxon>
        <taxon>Glires</taxon>
        <taxon>Rodentia</taxon>
        <taxon>Myomorpha</taxon>
        <taxon>Muroidea</taxon>
        <taxon>Muridae</taxon>
        <taxon>Murinae</taxon>
        <taxon>Mus</taxon>
        <taxon>Mus</taxon>
    </lineage>
</organism>
<proteinExistence type="evidence at protein level"/>
<accession>Q8C0N1</accession>
<name>KIF2B_MOUSE</name>
<evidence type="ECO:0000250" key="1">
    <source>
        <dbReference type="UniProtKB" id="Q8N4N8"/>
    </source>
</evidence>
<evidence type="ECO:0000255" key="2"/>
<evidence type="ECO:0000255" key="3">
    <source>
        <dbReference type="PROSITE-ProRule" id="PRU00283"/>
    </source>
</evidence>
<evidence type="ECO:0000256" key="4">
    <source>
        <dbReference type="SAM" id="MobiDB-lite"/>
    </source>
</evidence>
<feature type="chain" id="PRO_0000253717" description="Kinesin-like protein KIF2B">
    <location>
        <begin position="1"/>
        <end position="668"/>
    </location>
</feature>
<feature type="domain" description="Kinesin motor" evidence="3">
    <location>
        <begin position="213"/>
        <end position="543"/>
    </location>
</feature>
<feature type="region of interest" description="Disordered" evidence="4">
    <location>
        <begin position="585"/>
        <end position="605"/>
    </location>
</feature>
<feature type="coiled-coil region" evidence="2">
    <location>
        <begin position="149"/>
        <end position="177"/>
    </location>
</feature>
<feature type="coiled-coil region" evidence="2">
    <location>
        <begin position="646"/>
        <end position="667"/>
    </location>
</feature>
<feature type="compositionally biased region" description="Basic and acidic residues" evidence="4">
    <location>
        <begin position="585"/>
        <end position="604"/>
    </location>
</feature>
<feature type="binding site" evidence="3">
    <location>
        <begin position="303"/>
        <end position="310"/>
    </location>
    <ligand>
        <name>ATP</name>
        <dbReference type="ChEBI" id="CHEBI:30616"/>
    </ligand>
</feature>
<feature type="modified residue" description="Phosphothreonine; by PLK1" evidence="1">
    <location>
        <position position="125"/>
    </location>
</feature>
<feature type="modified residue" description="Phosphoserine; by PLK1" evidence="1">
    <location>
        <position position="204"/>
    </location>
</feature>
<comment type="function">
    <text evidence="1">Plus end-directed microtubule-dependent motor required for spindle assembly and chromosome movement during mitosis. Has microtubule depolymerization activity. Plays a role in chromosome congression.</text>
</comment>
<comment type="subcellular location">
    <subcellularLocation>
        <location evidence="1">Cytoplasm</location>
        <location evidence="1">Cytoskeleton</location>
        <location evidence="1">Microtubule organizing center</location>
        <location evidence="1">Centrosome</location>
    </subcellularLocation>
    <subcellularLocation>
        <location evidence="1">Cytoplasm</location>
        <location evidence="1">Cytoskeleton</location>
        <location evidence="1">Spindle</location>
    </subcellularLocation>
    <subcellularLocation>
        <location evidence="1">Chromosome</location>
        <location evidence="1">Centromere</location>
        <location evidence="1">Kinetochore</location>
    </subcellularLocation>
    <text evidence="1">Association with kinetochore is transient.</text>
</comment>
<comment type="PTM">
    <text evidence="1">Phosphorylation at Thr-125 by PLK1 is required for activity in the correction of kinetochore-microtubules attachment errors, while phosphorylation at Ser-204 also by PLK1 is required for the kinetochore localization and activity in prometaphase.</text>
</comment>
<comment type="similarity">
    <text evidence="3">Belongs to the TRAFAC class myosin-kinesin ATPase superfamily. Kinesin family. MCAK/KIF2 subfamily.</text>
</comment>